<accession>B4SWK2</accession>
<reference key="1">
    <citation type="journal article" date="2011" name="J. Bacteriol.">
        <title>Comparative genomics of 28 Salmonella enterica isolates: evidence for CRISPR-mediated adaptive sublineage evolution.</title>
        <authorList>
            <person name="Fricke W.F."/>
            <person name="Mammel M.K."/>
            <person name="McDermott P.F."/>
            <person name="Tartera C."/>
            <person name="White D.G."/>
            <person name="Leclerc J.E."/>
            <person name="Ravel J."/>
            <person name="Cebula T.A."/>
        </authorList>
    </citation>
    <scope>NUCLEOTIDE SEQUENCE [LARGE SCALE GENOMIC DNA]</scope>
    <source>
        <strain>SL254</strain>
    </source>
</reference>
<gene>
    <name evidence="1" type="primary">glyQ</name>
    <name type="ordered locus">SNSL254_A3932</name>
</gene>
<proteinExistence type="inferred from homology"/>
<protein>
    <recommendedName>
        <fullName evidence="1">Glycine--tRNA ligase alpha subunit</fullName>
        <ecNumber evidence="1">6.1.1.14</ecNumber>
    </recommendedName>
    <alternativeName>
        <fullName evidence="1">Glycyl-tRNA synthetase alpha subunit</fullName>
        <shortName evidence="1">GlyRS</shortName>
    </alternativeName>
</protein>
<sequence length="303" mass="34746">MQKFDTRTFQGLILTLQDYWARQGCTIVQPLDMEVGAGTSHPMTCLRALGPEPMATAYVQPSRRPTDGRYGENPNRLQHYYQFQVVIKPSPDNIQELYLGSLKELGMDPTIHDIRFVEDNWENPTLGAWGLGWEVWLNGMEVTQFTYFQQVGGLECKPVTGEITYGLERLAMYIQGVDSVYDLVWSDGPLGKTTYGDVFHQNEVEQSTYNFEYADVDFLFTCFEQYEKEAQQLLALENPLPLPAYERILKAAHSFNLLDARKAISVTERQRYILRIRTLTKAVAEAYYASREALGFPMCNKDK</sequence>
<evidence type="ECO:0000255" key="1">
    <source>
        <dbReference type="HAMAP-Rule" id="MF_00254"/>
    </source>
</evidence>
<comment type="catalytic activity">
    <reaction evidence="1">
        <text>tRNA(Gly) + glycine + ATP = glycyl-tRNA(Gly) + AMP + diphosphate</text>
        <dbReference type="Rhea" id="RHEA:16013"/>
        <dbReference type="Rhea" id="RHEA-COMP:9664"/>
        <dbReference type="Rhea" id="RHEA-COMP:9683"/>
        <dbReference type="ChEBI" id="CHEBI:30616"/>
        <dbReference type="ChEBI" id="CHEBI:33019"/>
        <dbReference type="ChEBI" id="CHEBI:57305"/>
        <dbReference type="ChEBI" id="CHEBI:78442"/>
        <dbReference type="ChEBI" id="CHEBI:78522"/>
        <dbReference type="ChEBI" id="CHEBI:456215"/>
        <dbReference type="EC" id="6.1.1.14"/>
    </reaction>
</comment>
<comment type="subunit">
    <text evidence="1">Tetramer of two alpha and two beta subunits.</text>
</comment>
<comment type="subcellular location">
    <subcellularLocation>
        <location evidence="1">Cytoplasm</location>
    </subcellularLocation>
</comment>
<comment type="similarity">
    <text evidence="1">Belongs to the class-II aminoacyl-tRNA synthetase family.</text>
</comment>
<name>SYGA_SALNS</name>
<dbReference type="EC" id="6.1.1.14" evidence="1"/>
<dbReference type="EMBL" id="CP001113">
    <property type="protein sequence ID" value="ACF62960.1"/>
    <property type="molecule type" value="Genomic_DNA"/>
</dbReference>
<dbReference type="RefSeq" id="WP_001168551.1">
    <property type="nucleotide sequence ID" value="NZ_CCMR01000004.1"/>
</dbReference>
<dbReference type="SMR" id="B4SWK2"/>
<dbReference type="GeneID" id="89546728"/>
<dbReference type="KEGG" id="see:SNSL254_A3932"/>
<dbReference type="HOGENOM" id="CLU_057066_1_0_6"/>
<dbReference type="Proteomes" id="UP000008824">
    <property type="component" value="Chromosome"/>
</dbReference>
<dbReference type="GO" id="GO:0005829">
    <property type="term" value="C:cytosol"/>
    <property type="evidence" value="ECO:0007669"/>
    <property type="project" value="TreeGrafter"/>
</dbReference>
<dbReference type="GO" id="GO:0005524">
    <property type="term" value="F:ATP binding"/>
    <property type="evidence" value="ECO:0007669"/>
    <property type="project" value="UniProtKB-UniRule"/>
</dbReference>
<dbReference type="GO" id="GO:0004820">
    <property type="term" value="F:glycine-tRNA ligase activity"/>
    <property type="evidence" value="ECO:0007669"/>
    <property type="project" value="UniProtKB-UniRule"/>
</dbReference>
<dbReference type="GO" id="GO:0006426">
    <property type="term" value="P:glycyl-tRNA aminoacylation"/>
    <property type="evidence" value="ECO:0007669"/>
    <property type="project" value="UniProtKB-UniRule"/>
</dbReference>
<dbReference type="CDD" id="cd00733">
    <property type="entry name" value="GlyRS_alpha_core"/>
    <property type="match status" value="1"/>
</dbReference>
<dbReference type="FunFam" id="1.20.58.180:FF:000001">
    <property type="entry name" value="Glycine--tRNA ligase alpha subunit"/>
    <property type="match status" value="1"/>
</dbReference>
<dbReference type="FunFam" id="3.30.930.10:FF:000006">
    <property type="entry name" value="Glycine--tRNA ligase alpha subunit"/>
    <property type="match status" value="1"/>
</dbReference>
<dbReference type="Gene3D" id="3.30.930.10">
    <property type="entry name" value="Bira Bifunctional Protein, Domain 2"/>
    <property type="match status" value="1"/>
</dbReference>
<dbReference type="Gene3D" id="1.20.58.180">
    <property type="entry name" value="Class II aaRS and biotin synthetases, domain 2"/>
    <property type="match status" value="1"/>
</dbReference>
<dbReference type="HAMAP" id="MF_00254">
    <property type="entry name" value="Gly_tRNA_synth_alpha"/>
    <property type="match status" value="1"/>
</dbReference>
<dbReference type="InterPro" id="IPR045864">
    <property type="entry name" value="aa-tRNA-synth_II/BPL/LPL"/>
</dbReference>
<dbReference type="InterPro" id="IPR006194">
    <property type="entry name" value="Gly-tRNA-synth_heterodimer"/>
</dbReference>
<dbReference type="InterPro" id="IPR002310">
    <property type="entry name" value="Gly-tRNA_ligase_asu"/>
</dbReference>
<dbReference type="NCBIfam" id="TIGR00388">
    <property type="entry name" value="glyQ"/>
    <property type="match status" value="1"/>
</dbReference>
<dbReference type="NCBIfam" id="NF006827">
    <property type="entry name" value="PRK09348.1"/>
    <property type="match status" value="1"/>
</dbReference>
<dbReference type="PANTHER" id="PTHR30075:SF2">
    <property type="entry name" value="GLYCINE--TRNA LIGASE, CHLOROPLASTIC_MITOCHONDRIAL 2"/>
    <property type="match status" value="1"/>
</dbReference>
<dbReference type="PANTHER" id="PTHR30075">
    <property type="entry name" value="GLYCYL-TRNA SYNTHETASE"/>
    <property type="match status" value="1"/>
</dbReference>
<dbReference type="Pfam" id="PF02091">
    <property type="entry name" value="tRNA-synt_2e"/>
    <property type="match status" value="1"/>
</dbReference>
<dbReference type="PRINTS" id="PR01044">
    <property type="entry name" value="TRNASYNTHGA"/>
</dbReference>
<dbReference type="SUPFAM" id="SSF55681">
    <property type="entry name" value="Class II aaRS and biotin synthetases"/>
    <property type="match status" value="1"/>
</dbReference>
<dbReference type="PROSITE" id="PS50861">
    <property type="entry name" value="AA_TRNA_LIGASE_II_GLYAB"/>
    <property type="match status" value="1"/>
</dbReference>
<keyword id="KW-0030">Aminoacyl-tRNA synthetase</keyword>
<keyword id="KW-0067">ATP-binding</keyword>
<keyword id="KW-0963">Cytoplasm</keyword>
<keyword id="KW-0436">Ligase</keyword>
<keyword id="KW-0547">Nucleotide-binding</keyword>
<keyword id="KW-0648">Protein biosynthesis</keyword>
<feature type="chain" id="PRO_1000101228" description="Glycine--tRNA ligase alpha subunit">
    <location>
        <begin position="1"/>
        <end position="303"/>
    </location>
</feature>
<organism>
    <name type="scientific">Salmonella newport (strain SL254)</name>
    <dbReference type="NCBI Taxonomy" id="423368"/>
    <lineage>
        <taxon>Bacteria</taxon>
        <taxon>Pseudomonadati</taxon>
        <taxon>Pseudomonadota</taxon>
        <taxon>Gammaproteobacteria</taxon>
        <taxon>Enterobacterales</taxon>
        <taxon>Enterobacteriaceae</taxon>
        <taxon>Salmonella</taxon>
    </lineage>
</organism>